<gene>
    <name evidence="1" type="primary">cheD</name>
    <name type="ordered locus">Atu0521</name>
    <name type="ORF">AGR_C_918</name>
</gene>
<sequence>MMEAAAKRVHIIQGEYKVVSDPDVVMTTILGSCVAACLRDPVAGLGGMNHFLLPGTGNVTGGDATRYGVHLMELLINGLLKQGARRDRLEAKVFGGAKTIASFSNVGEQNAIFAMQFLKDEGIPVISSSTGGDHGRKIEFWPVSGRARQHPLSGAETQKTVAMETRPVPAPKPVANDIEFF</sequence>
<comment type="function">
    <text evidence="1">Probably deamidates glutamine residues to glutamate on methyl-accepting chemotaxis receptors (MCPs), playing an important role in chemotaxis.</text>
</comment>
<comment type="catalytic activity">
    <reaction evidence="1">
        <text>L-glutaminyl-[protein] + H2O = L-glutamyl-[protein] + NH4(+)</text>
        <dbReference type="Rhea" id="RHEA:16441"/>
        <dbReference type="Rhea" id="RHEA-COMP:10207"/>
        <dbReference type="Rhea" id="RHEA-COMP:10208"/>
        <dbReference type="ChEBI" id="CHEBI:15377"/>
        <dbReference type="ChEBI" id="CHEBI:28938"/>
        <dbReference type="ChEBI" id="CHEBI:29973"/>
        <dbReference type="ChEBI" id="CHEBI:30011"/>
        <dbReference type="EC" id="3.5.1.44"/>
    </reaction>
</comment>
<comment type="similarity">
    <text evidence="1">Belongs to the CheD family.</text>
</comment>
<dbReference type="EC" id="3.5.1.44" evidence="1"/>
<dbReference type="EMBL" id="AE007869">
    <property type="protein sequence ID" value="AAK86335.1"/>
    <property type="molecule type" value="Genomic_DNA"/>
</dbReference>
<dbReference type="RefSeq" id="NP_353550.1">
    <property type="nucleotide sequence ID" value="NC_003062.2"/>
</dbReference>
<dbReference type="RefSeq" id="WP_006312925.1">
    <property type="nucleotide sequence ID" value="NC_003062.2"/>
</dbReference>
<dbReference type="SMR" id="Q7D1A4"/>
<dbReference type="STRING" id="176299.Atu0521"/>
<dbReference type="EnsemblBacteria" id="AAK86335">
    <property type="protein sequence ID" value="AAK86335"/>
    <property type="gene ID" value="Atu0521"/>
</dbReference>
<dbReference type="GeneID" id="1132559"/>
<dbReference type="KEGG" id="atu:Atu0521"/>
<dbReference type="PATRIC" id="fig|176299.10.peg.518"/>
<dbReference type="eggNOG" id="COG1871">
    <property type="taxonomic scope" value="Bacteria"/>
</dbReference>
<dbReference type="HOGENOM" id="CLU_087854_0_1_5"/>
<dbReference type="OrthoDB" id="9807202at2"/>
<dbReference type="PhylomeDB" id="Q7D1A4"/>
<dbReference type="BioCyc" id="AGRO:ATU0521-MONOMER"/>
<dbReference type="Proteomes" id="UP000000813">
    <property type="component" value="Chromosome circular"/>
</dbReference>
<dbReference type="GO" id="GO:0050568">
    <property type="term" value="F:protein-glutamine glutaminase activity"/>
    <property type="evidence" value="ECO:0007669"/>
    <property type="project" value="UniProtKB-UniRule"/>
</dbReference>
<dbReference type="GO" id="GO:0006935">
    <property type="term" value="P:chemotaxis"/>
    <property type="evidence" value="ECO:0007669"/>
    <property type="project" value="UniProtKB-UniRule"/>
</dbReference>
<dbReference type="CDD" id="cd16352">
    <property type="entry name" value="CheD"/>
    <property type="match status" value="1"/>
</dbReference>
<dbReference type="FunFam" id="3.30.1330.200:FF:000001">
    <property type="entry name" value="Probable chemoreceptor glutamine deamidase CheD"/>
    <property type="match status" value="1"/>
</dbReference>
<dbReference type="Gene3D" id="3.30.1330.200">
    <property type="match status" value="1"/>
</dbReference>
<dbReference type="HAMAP" id="MF_01440">
    <property type="entry name" value="CheD"/>
    <property type="match status" value="1"/>
</dbReference>
<dbReference type="InterPro" id="IPR038592">
    <property type="entry name" value="CheD-like_sf"/>
</dbReference>
<dbReference type="InterPro" id="IPR005659">
    <property type="entry name" value="Chemorcpt_Glu_NH3ase_CheD"/>
</dbReference>
<dbReference type="InterPro" id="IPR011324">
    <property type="entry name" value="Cytotoxic_necrot_fac-like_cat"/>
</dbReference>
<dbReference type="NCBIfam" id="NF010019">
    <property type="entry name" value="PRK13497.1"/>
    <property type="match status" value="1"/>
</dbReference>
<dbReference type="PANTHER" id="PTHR35147">
    <property type="entry name" value="CHEMORECEPTOR GLUTAMINE DEAMIDASE CHED-RELATED"/>
    <property type="match status" value="1"/>
</dbReference>
<dbReference type="PANTHER" id="PTHR35147:SF2">
    <property type="entry name" value="CHEMORECEPTOR GLUTAMINE DEAMIDASE CHED-RELATED"/>
    <property type="match status" value="1"/>
</dbReference>
<dbReference type="Pfam" id="PF03975">
    <property type="entry name" value="CheD"/>
    <property type="match status" value="1"/>
</dbReference>
<dbReference type="SUPFAM" id="SSF64438">
    <property type="entry name" value="CNF1/YfiH-like putative cysteine hydrolases"/>
    <property type="match status" value="1"/>
</dbReference>
<accession>Q7D1A4</accession>
<accession>Q7CP15</accession>
<protein>
    <recommendedName>
        <fullName evidence="1">Probable chemoreceptor glutamine deamidase CheD</fullName>
        <ecNumber evidence="1">3.5.1.44</ecNumber>
    </recommendedName>
</protein>
<reference key="1">
    <citation type="journal article" date="2001" name="Science">
        <title>Genome sequence of the plant pathogen and biotechnology agent Agrobacterium tumefaciens C58.</title>
        <authorList>
            <person name="Goodner B."/>
            <person name="Hinkle G."/>
            <person name="Gattung S."/>
            <person name="Miller N."/>
            <person name="Blanchard M."/>
            <person name="Qurollo B."/>
            <person name="Goldman B.S."/>
            <person name="Cao Y."/>
            <person name="Askenazi M."/>
            <person name="Halling C."/>
            <person name="Mullin L."/>
            <person name="Houmiel K."/>
            <person name="Gordon J."/>
            <person name="Vaudin M."/>
            <person name="Iartchouk O."/>
            <person name="Epp A."/>
            <person name="Liu F."/>
            <person name="Wollam C."/>
            <person name="Allinger M."/>
            <person name="Doughty D."/>
            <person name="Scott C."/>
            <person name="Lappas C."/>
            <person name="Markelz B."/>
            <person name="Flanagan C."/>
            <person name="Crowell C."/>
            <person name="Gurson J."/>
            <person name="Lomo C."/>
            <person name="Sear C."/>
            <person name="Strub G."/>
            <person name="Cielo C."/>
            <person name="Slater S."/>
        </authorList>
    </citation>
    <scope>NUCLEOTIDE SEQUENCE [LARGE SCALE GENOMIC DNA]</scope>
    <source>
        <strain>C58 / ATCC 33970</strain>
    </source>
</reference>
<reference key="2">
    <citation type="journal article" date="2001" name="Science">
        <title>The genome of the natural genetic engineer Agrobacterium tumefaciens C58.</title>
        <authorList>
            <person name="Wood D.W."/>
            <person name="Setubal J.C."/>
            <person name="Kaul R."/>
            <person name="Monks D.E."/>
            <person name="Kitajima J.P."/>
            <person name="Okura V.K."/>
            <person name="Zhou Y."/>
            <person name="Chen L."/>
            <person name="Wood G.E."/>
            <person name="Almeida N.F. Jr."/>
            <person name="Woo L."/>
            <person name="Chen Y."/>
            <person name="Paulsen I.T."/>
            <person name="Eisen J.A."/>
            <person name="Karp P.D."/>
            <person name="Bovee D. Sr."/>
            <person name="Chapman P."/>
            <person name="Clendenning J."/>
            <person name="Deatherage G."/>
            <person name="Gillet W."/>
            <person name="Grant C."/>
            <person name="Kutyavin T."/>
            <person name="Levy R."/>
            <person name="Li M.-J."/>
            <person name="McClelland E."/>
            <person name="Palmieri A."/>
            <person name="Raymond C."/>
            <person name="Rouse G."/>
            <person name="Saenphimmachak C."/>
            <person name="Wu Z."/>
            <person name="Romero P."/>
            <person name="Gordon D."/>
            <person name="Zhang S."/>
            <person name="Yoo H."/>
            <person name="Tao Y."/>
            <person name="Biddle P."/>
            <person name="Jung M."/>
            <person name="Krespan W."/>
            <person name="Perry M."/>
            <person name="Gordon-Kamm B."/>
            <person name="Liao L."/>
            <person name="Kim S."/>
            <person name="Hendrick C."/>
            <person name="Zhao Z.-Y."/>
            <person name="Dolan M."/>
            <person name="Chumley F."/>
            <person name="Tingey S.V."/>
            <person name="Tomb J.-F."/>
            <person name="Gordon M.P."/>
            <person name="Olson M.V."/>
            <person name="Nester E.W."/>
        </authorList>
    </citation>
    <scope>NUCLEOTIDE SEQUENCE [LARGE SCALE GENOMIC DNA]</scope>
    <source>
        <strain>C58 / ATCC 33970</strain>
    </source>
</reference>
<feature type="chain" id="PRO_0000250999" description="Probable chemoreceptor glutamine deamidase CheD">
    <location>
        <begin position="1"/>
        <end position="181"/>
    </location>
</feature>
<keyword id="KW-0145">Chemotaxis</keyword>
<keyword id="KW-0378">Hydrolase</keyword>
<keyword id="KW-1185">Reference proteome</keyword>
<proteinExistence type="inferred from homology"/>
<organism>
    <name type="scientific">Agrobacterium fabrum (strain C58 / ATCC 33970)</name>
    <name type="common">Agrobacterium tumefaciens (strain C58)</name>
    <dbReference type="NCBI Taxonomy" id="176299"/>
    <lineage>
        <taxon>Bacteria</taxon>
        <taxon>Pseudomonadati</taxon>
        <taxon>Pseudomonadota</taxon>
        <taxon>Alphaproteobacteria</taxon>
        <taxon>Hyphomicrobiales</taxon>
        <taxon>Rhizobiaceae</taxon>
        <taxon>Rhizobium/Agrobacterium group</taxon>
        <taxon>Agrobacterium</taxon>
        <taxon>Agrobacterium tumefaciens complex</taxon>
    </lineage>
</organism>
<evidence type="ECO:0000255" key="1">
    <source>
        <dbReference type="HAMAP-Rule" id="MF_01440"/>
    </source>
</evidence>
<name>CHED_AGRFC</name>